<reference key="1">
    <citation type="journal article" date="2003" name="J. Bacteriol.">
        <title>Complete genome sequence of the ammonia-oxidizing bacterium and obligate chemolithoautotroph Nitrosomonas europaea.</title>
        <authorList>
            <person name="Chain P."/>
            <person name="Lamerdin J.E."/>
            <person name="Larimer F.W."/>
            <person name="Regala W."/>
            <person name="Lao V."/>
            <person name="Land M.L."/>
            <person name="Hauser L."/>
            <person name="Hooper A.B."/>
            <person name="Klotz M.G."/>
            <person name="Norton J."/>
            <person name="Sayavedra-Soto L.A."/>
            <person name="Arciero D.M."/>
            <person name="Hommes N.G."/>
            <person name="Whittaker M.M."/>
            <person name="Arp D.J."/>
        </authorList>
    </citation>
    <scope>NUCLEOTIDE SEQUENCE [LARGE SCALE GENOMIC DNA]</scope>
    <source>
        <strain>ATCC 19718 / CIP 103999 / KCTC 2705 / NBRC 14298</strain>
    </source>
</reference>
<organism>
    <name type="scientific">Nitrosomonas europaea (strain ATCC 19718 / CIP 103999 / KCTC 2705 / NBRC 14298)</name>
    <dbReference type="NCBI Taxonomy" id="228410"/>
    <lineage>
        <taxon>Bacteria</taxon>
        <taxon>Pseudomonadati</taxon>
        <taxon>Pseudomonadota</taxon>
        <taxon>Betaproteobacteria</taxon>
        <taxon>Nitrosomonadales</taxon>
        <taxon>Nitrosomonadaceae</taxon>
        <taxon>Nitrosomonas</taxon>
    </lineage>
</organism>
<proteinExistence type="inferred from homology"/>
<dbReference type="EC" id="1.1.1.25" evidence="1"/>
<dbReference type="EMBL" id="AL954747">
    <property type="protein sequence ID" value="CAD85538.1"/>
    <property type="molecule type" value="Genomic_DNA"/>
</dbReference>
<dbReference type="RefSeq" id="WP_011112187.1">
    <property type="nucleotide sequence ID" value="NC_004757.1"/>
</dbReference>
<dbReference type="SMR" id="Q82U74"/>
<dbReference type="STRING" id="228410.NE1627"/>
<dbReference type="GeneID" id="87104793"/>
<dbReference type="KEGG" id="neu:NE1627"/>
<dbReference type="eggNOG" id="COG0169">
    <property type="taxonomic scope" value="Bacteria"/>
</dbReference>
<dbReference type="HOGENOM" id="CLU_044063_2_1_4"/>
<dbReference type="OrthoDB" id="9776868at2"/>
<dbReference type="PhylomeDB" id="Q82U74"/>
<dbReference type="UniPathway" id="UPA00053">
    <property type="reaction ID" value="UER00087"/>
</dbReference>
<dbReference type="Proteomes" id="UP000001416">
    <property type="component" value="Chromosome"/>
</dbReference>
<dbReference type="GO" id="GO:0005829">
    <property type="term" value="C:cytosol"/>
    <property type="evidence" value="ECO:0007669"/>
    <property type="project" value="TreeGrafter"/>
</dbReference>
<dbReference type="GO" id="GO:0050661">
    <property type="term" value="F:NADP binding"/>
    <property type="evidence" value="ECO:0007669"/>
    <property type="project" value="InterPro"/>
</dbReference>
<dbReference type="GO" id="GO:0004764">
    <property type="term" value="F:shikimate 3-dehydrogenase (NADP+) activity"/>
    <property type="evidence" value="ECO:0007669"/>
    <property type="project" value="UniProtKB-UniRule"/>
</dbReference>
<dbReference type="GO" id="GO:0008652">
    <property type="term" value="P:amino acid biosynthetic process"/>
    <property type="evidence" value="ECO:0007669"/>
    <property type="project" value="UniProtKB-KW"/>
</dbReference>
<dbReference type="GO" id="GO:0009073">
    <property type="term" value="P:aromatic amino acid family biosynthetic process"/>
    <property type="evidence" value="ECO:0007669"/>
    <property type="project" value="UniProtKB-KW"/>
</dbReference>
<dbReference type="GO" id="GO:0009423">
    <property type="term" value="P:chorismate biosynthetic process"/>
    <property type="evidence" value="ECO:0007669"/>
    <property type="project" value="UniProtKB-UniRule"/>
</dbReference>
<dbReference type="GO" id="GO:0019632">
    <property type="term" value="P:shikimate metabolic process"/>
    <property type="evidence" value="ECO:0007669"/>
    <property type="project" value="InterPro"/>
</dbReference>
<dbReference type="CDD" id="cd01065">
    <property type="entry name" value="NAD_bind_Shikimate_DH"/>
    <property type="match status" value="1"/>
</dbReference>
<dbReference type="FunFam" id="3.40.50.10860:FF:000006">
    <property type="entry name" value="Shikimate dehydrogenase (NADP(+))"/>
    <property type="match status" value="1"/>
</dbReference>
<dbReference type="Gene3D" id="3.40.50.10860">
    <property type="entry name" value="Leucine Dehydrogenase, chain A, domain 1"/>
    <property type="match status" value="1"/>
</dbReference>
<dbReference type="Gene3D" id="3.40.50.720">
    <property type="entry name" value="NAD(P)-binding Rossmann-like Domain"/>
    <property type="match status" value="1"/>
</dbReference>
<dbReference type="HAMAP" id="MF_00222">
    <property type="entry name" value="Shikimate_DH_AroE"/>
    <property type="match status" value="1"/>
</dbReference>
<dbReference type="InterPro" id="IPR046346">
    <property type="entry name" value="Aminoacid_DH-like_N_sf"/>
</dbReference>
<dbReference type="InterPro" id="IPR036291">
    <property type="entry name" value="NAD(P)-bd_dom_sf"/>
</dbReference>
<dbReference type="InterPro" id="IPR041121">
    <property type="entry name" value="SDH_C"/>
</dbReference>
<dbReference type="InterPro" id="IPR011342">
    <property type="entry name" value="Shikimate_DH"/>
</dbReference>
<dbReference type="InterPro" id="IPR013708">
    <property type="entry name" value="Shikimate_DH-bd_N"/>
</dbReference>
<dbReference type="InterPro" id="IPR022893">
    <property type="entry name" value="Shikimate_DH_fam"/>
</dbReference>
<dbReference type="InterPro" id="IPR006151">
    <property type="entry name" value="Shikm_DH/Glu-tRNA_Rdtase"/>
</dbReference>
<dbReference type="NCBIfam" id="TIGR00507">
    <property type="entry name" value="aroE"/>
    <property type="match status" value="1"/>
</dbReference>
<dbReference type="NCBIfam" id="NF001310">
    <property type="entry name" value="PRK00258.1-2"/>
    <property type="match status" value="1"/>
</dbReference>
<dbReference type="PANTHER" id="PTHR21089:SF1">
    <property type="entry name" value="BIFUNCTIONAL 3-DEHYDROQUINATE DEHYDRATASE_SHIKIMATE DEHYDROGENASE, CHLOROPLASTIC"/>
    <property type="match status" value="1"/>
</dbReference>
<dbReference type="PANTHER" id="PTHR21089">
    <property type="entry name" value="SHIKIMATE DEHYDROGENASE"/>
    <property type="match status" value="1"/>
</dbReference>
<dbReference type="Pfam" id="PF18317">
    <property type="entry name" value="SDH_C"/>
    <property type="match status" value="1"/>
</dbReference>
<dbReference type="Pfam" id="PF01488">
    <property type="entry name" value="Shikimate_DH"/>
    <property type="match status" value="1"/>
</dbReference>
<dbReference type="Pfam" id="PF08501">
    <property type="entry name" value="Shikimate_dh_N"/>
    <property type="match status" value="1"/>
</dbReference>
<dbReference type="SUPFAM" id="SSF53223">
    <property type="entry name" value="Aminoacid dehydrogenase-like, N-terminal domain"/>
    <property type="match status" value="1"/>
</dbReference>
<dbReference type="SUPFAM" id="SSF51735">
    <property type="entry name" value="NAD(P)-binding Rossmann-fold domains"/>
    <property type="match status" value="1"/>
</dbReference>
<keyword id="KW-0028">Amino-acid biosynthesis</keyword>
<keyword id="KW-0057">Aromatic amino acid biosynthesis</keyword>
<keyword id="KW-0521">NADP</keyword>
<keyword id="KW-0560">Oxidoreductase</keyword>
<keyword id="KW-1185">Reference proteome</keyword>
<gene>
    <name evidence="1" type="primary">aroE</name>
    <name type="ordered locus">NE1627</name>
</gene>
<feature type="chain" id="PRO_1000021314" description="Shikimate dehydrogenase (NADP(+))">
    <location>
        <begin position="1"/>
        <end position="276"/>
    </location>
</feature>
<feature type="active site" description="Proton acceptor" evidence="1">
    <location>
        <position position="65"/>
    </location>
</feature>
<feature type="binding site" evidence="1">
    <location>
        <begin position="14"/>
        <end position="16"/>
    </location>
    <ligand>
        <name>shikimate</name>
        <dbReference type="ChEBI" id="CHEBI:36208"/>
    </ligand>
</feature>
<feature type="binding site" evidence="1">
    <location>
        <position position="61"/>
    </location>
    <ligand>
        <name>shikimate</name>
        <dbReference type="ChEBI" id="CHEBI:36208"/>
    </ligand>
</feature>
<feature type="binding site" evidence="1">
    <location>
        <position position="77"/>
    </location>
    <ligand>
        <name>NADP(+)</name>
        <dbReference type="ChEBI" id="CHEBI:58349"/>
    </ligand>
</feature>
<feature type="binding site" evidence="1">
    <location>
        <position position="86"/>
    </location>
    <ligand>
        <name>shikimate</name>
        <dbReference type="ChEBI" id="CHEBI:36208"/>
    </ligand>
</feature>
<feature type="binding site" evidence="1">
    <location>
        <position position="102"/>
    </location>
    <ligand>
        <name>shikimate</name>
        <dbReference type="ChEBI" id="CHEBI:36208"/>
    </ligand>
</feature>
<feature type="binding site" evidence="1">
    <location>
        <begin position="127"/>
        <end position="131"/>
    </location>
    <ligand>
        <name>NADP(+)</name>
        <dbReference type="ChEBI" id="CHEBI:58349"/>
    </ligand>
</feature>
<feature type="binding site" evidence="1">
    <location>
        <begin position="151"/>
        <end position="156"/>
    </location>
    <ligand>
        <name>NADP(+)</name>
        <dbReference type="ChEBI" id="CHEBI:58349"/>
    </ligand>
</feature>
<feature type="binding site" evidence="1">
    <location>
        <position position="214"/>
    </location>
    <ligand>
        <name>NADP(+)</name>
        <dbReference type="ChEBI" id="CHEBI:58349"/>
    </ligand>
</feature>
<feature type="binding site" evidence="1">
    <location>
        <position position="216"/>
    </location>
    <ligand>
        <name>shikimate</name>
        <dbReference type="ChEBI" id="CHEBI:36208"/>
    </ligand>
</feature>
<feature type="binding site" evidence="1">
    <location>
        <position position="238"/>
    </location>
    <ligand>
        <name>NADP(+)</name>
        <dbReference type="ChEBI" id="CHEBI:58349"/>
    </ligand>
</feature>
<protein>
    <recommendedName>
        <fullName evidence="1">Shikimate dehydrogenase (NADP(+))</fullName>
        <shortName evidence="1">SDH</shortName>
        <ecNumber evidence="1">1.1.1.25</ecNumber>
    </recommendedName>
</protein>
<evidence type="ECO:0000255" key="1">
    <source>
        <dbReference type="HAMAP-Rule" id="MF_00222"/>
    </source>
</evidence>
<sequence length="276" mass="30350">MDTYAVIGNPVAHSKSPFIHARFAQQTGRIIHYTALLAPLDRFEQTVLDFRKTGGKGMNITVPFKFEAFTLASRLTDRASAARAVNTFRFEETGEILGDNTDGVGLIRDIEVNLNFPLAGKRILLMGAGGAASGVILPLLQQQPDLLAIANRTPDKAVSLQRQFASYSNITTGHYHDFAGQHFDLIINATSASLHNELPPVPADLFRNAFAYDMLYSSRLTPFLELARVQGAGYLADGAGMLVEQAAESFLLWHGIRPETQTVIRQLRDNLRHPTS</sequence>
<comment type="function">
    <text evidence="1">Involved in the biosynthesis of the chorismate, which leads to the biosynthesis of aromatic amino acids. Catalyzes the reversible NADPH linked reduction of 3-dehydroshikimate (DHSA) to yield shikimate (SA).</text>
</comment>
<comment type="catalytic activity">
    <reaction evidence="1">
        <text>shikimate + NADP(+) = 3-dehydroshikimate + NADPH + H(+)</text>
        <dbReference type="Rhea" id="RHEA:17737"/>
        <dbReference type="ChEBI" id="CHEBI:15378"/>
        <dbReference type="ChEBI" id="CHEBI:16630"/>
        <dbReference type="ChEBI" id="CHEBI:36208"/>
        <dbReference type="ChEBI" id="CHEBI:57783"/>
        <dbReference type="ChEBI" id="CHEBI:58349"/>
        <dbReference type="EC" id="1.1.1.25"/>
    </reaction>
</comment>
<comment type="pathway">
    <text evidence="1">Metabolic intermediate biosynthesis; chorismate biosynthesis; chorismate from D-erythrose 4-phosphate and phosphoenolpyruvate: step 4/7.</text>
</comment>
<comment type="subunit">
    <text evidence="1">Homodimer.</text>
</comment>
<comment type="similarity">
    <text evidence="1">Belongs to the shikimate dehydrogenase family.</text>
</comment>
<accession>Q82U74</accession>
<name>AROE_NITEU</name>